<dbReference type="EMBL" id="CP000728">
    <property type="protein sequence ID" value="ABS42864.1"/>
    <property type="molecule type" value="Genomic_DNA"/>
</dbReference>
<dbReference type="RefSeq" id="WP_003359427.1">
    <property type="nucleotide sequence ID" value="NC_009699.1"/>
</dbReference>
<dbReference type="SMR" id="A7GJM4"/>
<dbReference type="KEGG" id="cbf:CLI_3873"/>
<dbReference type="HOGENOM" id="CLU_113441_5_1_9"/>
<dbReference type="Proteomes" id="UP000002410">
    <property type="component" value="Chromosome"/>
</dbReference>
<dbReference type="GO" id="GO:0005737">
    <property type="term" value="C:cytoplasm"/>
    <property type="evidence" value="ECO:0007669"/>
    <property type="project" value="UniProtKB-ARBA"/>
</dbReference>
<dbReference type="GO" id="GO:1990904">
    <property type="term" value="C:ribonucleoprotein complex"/>
    <property type="evidence" value="ECO:0007669"/>
    <property type="project" value="UniProtKB-KW"/>
</dbReference>
<dbReference type="GO" id="GO:0005840">
    <property type="term" value="C:ribosome"/>
    <property type="evidence" value="ECO:0007669"/>
    <property type="project" value="UniProtKB-KW"/>
</dbReference>
<dbReference type="GO" id="GO:0070181">
    <property type="term" value="F:small ribosomal subunit rRNA binding"/>
    <property type="evidence" value="ECO:0007669"/>
    <property type="project" value="TreeGrafter"/>
</dbReference>
<dbReference type="GO" id="GO:0003735">
    <property type="term" value="F:structural constituent of ribosome"/>
    <property type="evidence" value="ECO:0007669"/>
    <property type="project" value="InterPro"/>
</dbReference>
<dbReference type="GO" id="GO:0006412">
    <property type="term" value="P:translation"/>
    <property type="evidence" value="ECO:0007669"/>
    <property type="project" value="UniProtKB-UniRule"/>
</dbReference>
<dbReference type="CDD" id="cd00473">
    <property type="entry name" value="bS6"/>
    <property type="match status" value="1"/>
</dbReference>
<dbReference type="FunFam" id="3.30.70.60:FF:000002">
    <property type="entry name" value="30S ribosomal protein S6"/>
    <property type="match status" value="1"/>
</dbReference>
<dbReference type="Gene3D" id="3.30.70.60">
    <property type="match status" value="1"/>
</dbReference>
<dbReference type="HAMAP" id="MF_00360">
    <property type="entry name" value="Ribosomal_bS6"/>
    <property type="match status" value="1"/>
</dbReference>
<dbReference type="InterPro" id="IPR000529">
    <property type="entry name" value="Ribosomal_bS6"/>
</dbReference>
<dbReference type="InterPro" id="IPR035980">
    <property type="entry name" value="Ribosomal_bS6_sf"/>
</dbReference>
<dbReference type="InterPro" id="IPR020814">
    <property type="entry name" value="Ribosomal_S6_plastid/chlpt"/>
</dbReference>
<dbReference type="InterPro" id="IPR014717">
    <property type="entry name" value="Transl_elong_EF1B/ribsomal_bS6"/>
</dbReference>
<dbReference type="NCBIfam" id="TIGR00166">
    <property type="entry name" value="S6"/>
    <property type="match status" value="1"/>
</dbReference>
<dbReference type="PANTHER" id="PTHR21011">
    <property type="entry name" value="MITOCHONDRIAL 28S RIBOSOMAL PROTEIN S6"/>
    <property type="match status" value="1"/>
</dbReference>
<dbReference type="PANTHER" id="PTHR21011:SF1">
    <property type="entry name" value="SMALL RIBOSOMAL SUBUNIT PROTEIN BS6M"/>
    <property type="match status" value="1"/>
</dbReference>
<dbReference type="Pfam" id="PF01250">
    <property type="entry name" value="Ribosomal_S6"/>
    <property type="match status" value="1"/>
</dbReference>
<dbReference type="SUPFAM" id="SSF54995">
    <property type="entry name" value="Ribosomal protein S6"/>
    <property type="match status" value="1"/>
</dbReference>
<gene>
    <name evidence="1" type="primary">rpsF</name>
    <name type="ordered locus">CLI_3873</name>
</gene>
<keyword id="KW-0687">Ribonucleoprotein</keyword>
<keyword id="KW-0689">Ribosomal protein</keyword>
<keyword id="KW-0694">RNA-binding</keyword>
<keyword id="KW-0699">rRNA-binding</keyword>
<feature type="chain" id="PRO_1000005249" description="Small ribosomal subunit protein bS6">
    <location>
        <begin position="1"/>
        <end position="94"/>
    </location>
</feature>
<evidence type="ECO:0000255" key="1">
    <source>
        <dbReference type="HAMAP-Rule" id="MF_00360"/>
    </source>
</evidence>
<evidence type="ECO:0000305" key="2"/>
<organism>
    <name type="scientific">Clostridium botulinum (strain Langeland / NCTC 10281 / Type F)</name>
    <dbReference type="NCBI Taxonomy" id="441772"/>
    <lineage>
        <taxon>Bacteria</taxon>
        <taxon>Bacillati</taxon>
        <taxon>Bacillota</taxon>
        <taxon>Clostridia</taxon>
        <taxon>Eubacteriales</taxon>
        <taxon>Clostridiaceae</taxon>
        <taxon>Clostridium</taxon>
    </lineage>
</organism>
<reference key="1">
    <citation type="submission" date="2007-06" db="EMBL/GenBank/DDBJ databases">
        <authorList>
            <person name="Brinkac L.M."/>
            <person name="Daugherty S."/>
            <person name="Dodson R.J."/>
            <person name="Madupu R."/>
            <person name="Brown J.L."/>
            <person name="Bruce D."/>
            <person name="Detter C."/>
            <person name="Munk C."/>
            <person name="Smith L.A."/>
            <person name="Smith T.J."/>
            <person name="White O."/>
            <person name="Brettin T.S."/>
        </authorList>
    </citation>
    <scope>NUCLEOTIDE SEQUENCE [LARGE SCALE GENOMIC DNA]</scope>
    <source>
        <strain>Langeland / NCTC 10281 / Type F</strain>
    </source>
</reference>
<name>RS6_CLOBL</name>
<proteinExistence type="inferred from homology"/>
<protein>
    <recommendedName>
        <fullName evidence="1">Small ribosomal subunit protein bS6</fullName>
    </recommendedName>
    <alternativeName>
        <fullName evidence="2">30S ribosomal protein S6</fullName>
    </alternativeName>
</protein>
<sequence length="94" mass="10905">MRKYETVFILNPALDEEGYKANVEKFKGVIENAGGTVDNVDLWGKRKLAYEVKKVSEGYYTLMNFTADTELPKELDRVFRITDTVIRHMIITQE</sequence>
<comment type="function">
    <text evidence="1">Binds together with bS18 to 16S ribosomal RNA.</text>
</comment>
<comment type="similarity">
    <text evidence="1">Belongs to the bacterial ribosomal protein bS6 family.</text>
</comment>
<accession>A7GJM4</accession>